<comment type="function">
    <text evidence="1 3">Destroys superoxide anion radicals which are normally produced within the cells and which are toxic to biological systems (By similarity). Plays important role in chloroplast development, particularly in the maintenance of thylakoids membranes. Seems to act as a heterodimer with FSD2.</text>
</comment>
<comment type="catalytic activity">
    <reaction evidence="3">
        <text>2 superoxide + 2 H(+) = H2O2 + O2</text>
        <dbReference type="Rhea" id="RHEA:20696"/>
        <dbReference type="ChEBI" id="CHEBI:15378"/>
        <dbReference type="ChEBI" id="CHEBI:15379"/>
        <dbReference type="ChEBI" id="CHEBI:16240"/>
        <dbReference type="ChEBI" id="CHEBI:18421"/>
        <dbReference type="EC" id="1.15.1.1"/>
    </reaction>
</comment>
<comment type="cofactor">
    <cofactor evidence="1">
        <name>Fe cation</name>
        <dbReference type="ChEBI" id="CHEBI:24875"/>
    </cofactor>
    <text evidence="1">Binds 1 Fe cation per subunit.</text>
</comment>
<comment type="activity regulation">
    <text evidence="4">Activated by cpn20/cpn21 (in vitro).</text>
</comment>
<comment type="subunit">
    <text evidence="3 5">Homodimer. Heterodimer with FSD2 (PubMed:18996978). Interacts with MRL7 (PubMed:23956074).</text>
</comment>
<comment type="interaction">
    <interactant intactId="EBI-4430441">
        <id>Q9FMX0</id>
    </interactant>
    <interactant intactId="EBI-4424866">
        <id>Q9LU64</id>
        <label>FSD2</label>
    </interactant>
    <organismsDiffer>false</organismsDiffer>
    <experiments>7</experiments>
</comment>
<comment type="subcellular location">
    <subcellularLocation>
        <location evidence="3">Plastid</location>
        <location evidence="3">Chloroplast thylakoid</location>
    </subcellularLocation>
</comment>
<comment type="disruption phenotype">
    <text evidence="3">Pale green phenotype. Abnormal plastids, highly vacuolated and without internal membrane structures like thylakoids.</text>
</comment>
<comment type="similarity">
    <text evidence="8">Belongs to the iron/manganese superoxide dismutase family.</text>
</comment>
<proteinExistence type="evidence at protein level"/>
<sequence>MSSCVVTTSCFYTISDSSIRLKSPKLLNLSNQQRRRSLRSRGGLKVEAYYGLKTPPYPLDALEPYMSRRTLEVHWGKHHRGYVDNLNKQLGKDDRLYGYTMEELIKATYNNGNPLPEFNNAAQVYNHDFFWESMQPGGGDTPQKGVLEQIDKDFGSFTNFREKFTNAALTQFGSGWVWLVLKREERRLEVVKTSNAINPLVWDDIPIICVDVWEHSYYLDYKNDRAKYINTFLNHLVSWNAAMSRMARAEAFVNLGEPNIPIA</sequence>
<gene>
    <name evidence="6 7" type="primary">FSD3</name>
    <name evidence="9" type="ordered locus">At5g23310</name>
    <name evidence="10" type="ORF">MKD15.17</name>
</gene>
<keyword id="KW-0150">Chloroplast</keyword>
<keyword id="KW-0408">Iron</keyword>
<keyword id="KW-0479">Metal-binding</keyword>
<keyword id="KW-0560">Oxidoreductase</keyword>
<keyword id="KW-0934">Plastid</keyword>
<keyword id="KW-1185">Reference proteome</keyword>
<keyword id="KW-0793">Thylakoid</keyword>
<keyword id="KW-0809">Transit peptide</keyword>
<dbReference type="EC" id="1.15.1.1" evidence="3"/>
<dbReference type="EMBL" id="AB007648">
    <property type="protein sequence ID" value="BAB11186.1"/>
    <property type="molecule type" value="Genomic_DNA"/>
</dbReference>
<dbReference type="EMBL" id="CP002688">
    <property type="protein sequence ID" value="AED93150.1"/>
    <property type="molecule type" value="Genomic_DNA"/>
</dbReference>
<dbReference type="EMBL" id="AY065458">
    <property type="protein sequence ID" value="AAL38899.1"/>
    <property type="molecule type" value="mRNA"/>
</dbReference>
<dbReference type="EMBL" id="AY091225">
    <property type="protein sequence ID" value="AAM14164.1"/>
    <property type="molecule type" value="mRNA"/>
</dbReference>
<dbReference type="EMBL" id="AY086656">
    <property type="protein sequence ID" value="AAM63713.1"/>
    <property type="molecule type" value="mRNA"/>
</dbReference>
<dbReference type="EMBL" id="AF061852">
    <property type="protein sequence ID" value="AAC24834.1"/>
    <property type="molecule type" value="mRNA"/>
</dbReference>
<dbReference type="PIR" id="T51732">
    <property type="entry name" value="T51732"/>
</dbReference>
<dbReference type="RefSeq" id="NP_197722.1">
    <property type="nucleotide sequence ID" value="NM_122237.4"/>
</dbReference>
<dbReference type="SMR" id="Q9FMX0"/>
<dbReference type="BioGRID" id="17670">
    <property type="interactions" value="4"/>
</dbReference>
<dbReference type="FunCoup" id="Q9FMX0">
    <property type="interactions" value="283"/>
</dbReference>
<dbReference type="IntAct" id="Q9FMX0">
    <property type="interactions" value="4"/>
</dbReference>
<dbReference type="STRING" id="3702.Q9FMX0"/>
<dbReference type="PaxDb" id="3702-AT5G23310.1"/>
<dbReference type="ProMEX" id="Q9FMX0"/>
<dbReference type="ProteomicsDB" id="232600"/>
<dbReference type="EnsemblPlants" id="AT5G23310.1">
    <property type="protein sequence ID" value="AT5G23310.1"/>
    <property type="gene ID" value="AT5G23310"/>
</dbReference>
<dbReference type="GeneID" id="832395"/>
<dbReference type="Gramene" id="AT5G23310.1">
    <property type="protein sequence ID" value="AT5G23310.1"/>
    <property type="gene ID" value="AT5G23310"/>
</dbReference>
<dbReference type="KEGG" id="ath:AT5G23310"/>
<dbReference type="Araport" id="AT5G23310"/>
<dbReference type="TAIR" id="AT5G23310">
    <property type="gene designation" value="FSD3"/>
</dbReference>
<dbReference type="eggNOG" id="KOG0876">
    <property type="taxonomic scope" value="Eukaryota"/>
</dbReference>
<dbReference type="HOGENOM" id="CLU_031625_0_0_1"/>
<dbReference type="InParanoid" id="Q9FMX0"/>
<dbReference type="OMA" id="HNQFWEM"/>
<dbReference type="OrthoDB" id="239262at2759"/>
<dbReference type="PhylomeDB" id="Q9FMX0"/>
<dbReference type="PRO" id="PR:Q9FMX0"/>
<dbReference type="Proteomes" id="UP000006548">
    <property type="component" value="Chromosome 5"/>
</dbReference>
<dbReference type="ExpressionAtlas" id="Q9FMX0">
    <property type="expression patterns" value="baseline and differential"/>
</dbReference>
<dbReference type="GO" id="GO:0009507">
    <property type="term" value="C:chloroplast"/>
    <property type="evidence" value="ECO:0000314"/>
    <property type="project" value="TAIR"/>
</dbReference>
<dbReference type="GO" id="GO:0042644">
    <property type="term" value="C:chloroplast nucleoid"/>
    <property type="evidence" value="ECO:0000314"/>
    <property type="project" value="UniProtKB"/>
</dbReference>
<dbReference type="GO" id="GO:0009534">
    <property type="term" value="C:chloroplast thylakoid"/>
    <property type="evidence" value="ECO:0007669"/>
    <property type="project" value="UniProtKB-SubCell"/>
</dbReference>
<dbReference type="GO" id="GO:0042646">
    <property type="term" value="C:plastid nucleoid"/>
    <property type="evidence" value="ECO:0000314"/>
    <property type="project" value="TAIR"/>
</dbReference>
<dbReference type="GO" id="GO:0009579">
    <property type="term" value="C:thylakoid"/>
    <property type="evidence" value="ECO:0000314"/>
    <property type="project" value="TAIR"/>
</dbReference>
<dbReference type="GO" id="GO:0046872">
    <property type="term" value="F:metal ion binding"/>
    <property type="evidence" value="ECO:0007669"/>
    <property type="project" value="UniProtKB-KW"/>
</dbReference>
<dbReference type="GO" id="GO:0004784">
    <property type="term" value="F:superoxide dismutase activity"/>
    <property type="evidence" value="ECO:0000314"/>
    <property type="project" value="UniProtKB"/>
</dbReference>
<dbReference type="FunFam" id="1.10.287.990:FF:000002">
    <property type="entry name" value="Superoxide dismutase"/>
    <property type="match status" value="1"/>
</dbReference>
<dbReference type="FunFam" id="3.55.40.20:FF:000007">
    <property type="entry name" value="Superoxide dismutase"/>
    <property type="match status" value="1"/>
</dbReference>
<dbReference type="Gene3D" id="1.10.287.990">
    <property type="entry name" value="Fe,Mn superoxide dismutase (SOD) domain"/>
    <property type="match status" value="1"/>
</dbReference>
<dbReference type="Gene3D" id="3.55.40.20">
    <property type="entry name" value="Iron/manganese superoxide dismutase, C-terminal domain"/>
    <property type="match status" value="1"/>
</dbReference>
<dbReference type="InterPro" id="IPR001189">
    <property type="entry name" value="Mn/Fe_SOD"/>
</dbReference>
<dbReference type="InterPro" id="IPR019833">
    <property type="entry name" value="Mn/Fe_SOD_BS"/>
</dbReference>
<dbReference type="InterPro" id="IPR019832">
    <property type="entry name" value="Mn/Fe_SOD_C"/>
</dbReference>
<dbReference type="InterPro" id="IPR019831">
    <property type="entry name" value="Mn/Fe_SOD_N"/>
</dbReference>
<dbReference type="InterPro" id="IPR036324">
    <property type="entry name" value="Mn/Fe_SOD_N_sf"/>
</dbReference>
<dbReference type="InterPro" id="IPR036314">
    <property type="entry name" value="SOD_C_sf"/>
</dbReference>
<dbReference type="PANTHER" id="PTHR42769">
    <property type="entry name" value="SUPEROXIDE DISMUTASE"/>
    <property type="match status" value="1"/>
</dbReference>
<dbReference type="PANTHER" id="PTHR42769:SF10">
    <property type="entry name" value="SUPEROXIDE DISMUTASE [FE] 3, CHLOROPLASTIC"/>
    <property type="match status" value="1"/>
</dbReference>
<dbReference type="Pfam" id="PF02777">
    <property type="entry name" value="Sod_Fe_C"/>
    <property type="match status" value="1"/>
</dbReference>
<dbReference type="Pfam" id="PF00081">
    <property type="entry name" value="Sod_Fe_N"/>
    <property type="match status" value="1"/>
</dbReference>
<dbReference type="PRINTS" id="PR01703">
    <property type="entry name" value="MNSODISMTASE"/>
</dbReference>
<dbReference type="SUPFAM" id="SSF54719">
    <property type="entry name" value="Fe,Mn superoxide dismutase (SOD), C-terminal domain"/>
    <property type="match status" value="1"/>
</dbReference>
<dbReference type="SUPFAM" id="SSF46609">
    <property type="entry name" value="Fe,Mn superoxide dismutase (SOD), N-terminal domain"/>
    <property type="match status" value="1"/>
</dbReference>
<dbReference type="PROSITE" id="PS00088">
    <property type="entry name" value="SOD_MN"/>
    <property type="match status" value="1"/>
</dbReference>
<organism>
    <name type="scientific">Arabidopsis thaliana</name>
    <name type="common">Mouse-ear cress</name>
    <dbReference type="NCBI Taxonomy" id="3702"/>
    <lineage>
        <taxon>Eukaryota</taxon>
        <taxon>Viridiplantae</taxon>
        <taxon>Streptophyta</taxon>
        <taxon>Embryophyta</taxon>
        <taxon>Tracheophyta</taxon>
        <taxon>Spermatophyta</taxon>
        <taxon>Magnoliopsida</taxon>
        <taxon>eudicotyledons</taxon>
        <taxon>Gunneridae</taxon>
        <taxon>Pentapetalae</taxon>
        <taxon>rosids</taxon>
        <taxon>malvids</taxon>
        <taxon>Brassicales</taxon>
        <taxon>Brassicaceae</taxon>
        <taxon>Camelineae</taxon>
        <taxon>Arabidopsis</taxon>
    </lineage>
</organism>
<accession>Q9FMX0</accession>
<accession>O81240</accession>
<accession>Q8LCD9</accession>
<name>SODF3_ARATH</name>
<evidence type="ECO:0000250" key="1">
    <source>
        <dbReference type="UniProtKB" id="Q9X6W9"/>
    </source>
</evidence>
<evidence type="ECO:0000255" key="2"/>
<evidence type="ECO:0000269" key="3">
    <source>
    </source>
</evidence>
<evidence type="ECO:0000269" key="4">
    <source>
    </source>
</evidence>
<evidence type="ECO:0000269" key="5">
    <source>
    </source>
</evidence>
<evidence type="ECO:0000303" key="6">
    <source>
    </source>
</evidence>
<evidence type="ECO:0000303" key="7">
    <source>
    </source>
</evidence>
<evidence type="ECO:0000305" key="8"/>
<evidence type="ECO:0000312" key="9">
    <source>
        <dbReference type="Araport" id="AT5G23310"/>
    </source>
</evidence>
<evidence type="ECO:0000312" key="10">
    <source>
        <dbReference type="EMBL" id="BAB11186.1"/>
    </source>
</evidence>
<protein>
    <recommendedName>
        <fullName evidence="6 7">Superoxide dismutase [Fe] 3, chloroplastic</fullName>
        <ecNumber evidence="3">1.15.1.1</ecNumber>
    </recommendedName>
    <alternativeName>
        <fullName evidence="6 7">Protein FE SUPEROXIDE DISMUTASE 3</fullName>
    </alternativeName>
</protein>
<feature type="transit peptide" description="Chloroplast" evidence="2">
    <location>
        <begin position="1"/>
        <end position="41"/>
    </location>
</feature>
<feature type="chain" id="PRO_0000421266" description="Superoxide dismutase [Fe] 3, chloroplastic">
    <location>
        <begin position="42"/>
        <end position="263"/>
    </location>
</feature>
<feature type="binding site" evidence="1">
    <location>
        <position position="74"/>
    </location>
    <ligand>
        <name>Fe cation</name>
        <dbReference type="ChEBI" id="CHEBI:24875"/>
    </ligand>
</feature>
<feature type="binding site" evidence="1">
    <location>
        <position position="127"/>
    </location>
    <ligand>
        <name>Fe cation</name>
        <dbReference type="ChEBI" id="CHEBI:24875"/>
    </ligand>
</feature>
<feature type="binding site" evidence="1">
    <location>
        <position position="211"/>
    </location>
    <ligand>
        <name>Fe cation</name>
        <dbReference type="ChEBI" id="CHEBI:24875"/>
    </ligand>
</feature>
<feature type="binding site" evidence="1">
    <location>
        <position position="215"/>
    </location>
    <ligand>
        <name>Fe cation</name>
        <dbReference type="ChEBI" id="CHEBI:24875"/>
    </ligand>
</feature>
<feature type="sequence conflict" description="In Ref. 4; AAM63713." evidence="8" ref="4">
    <original>K</original>
    <variation>N</variation>
    <location>
        <position position="227"/>
    </location>
</feature>
<reference key="1">
    <citation type="journal article" date="1997" name="DNA Res.">
        <title>Structural analysis of Arabidopsis thaliana chromosome 5. III. Sequence features of the regions of 1,191,918 bp covered by seventeen physically assigned P1 clones.</title>
        <authorList>
            <person name="Nakamura Y."/>
            <person name="Sato S."/>
            <person name="Kaneko T."/>
            <person name="Kotani H."/>
            <person name="Asamizu E."/>
            <person name="Miyajima N."/>
            <person name="Tabata S."/>
        </authorList>
    </citation>
    <scope>NUCLEOTIDE SEQUENCE [LARGE SCALE GENOMIC DNA]</scope>
    <source>
        <strain>cv. Columbia</strain>
    </source>
</reference>
<reference key="2">
    <citation type="journal article" date="2017" name="Plant J.">
        <title>Araport11: a complete reannotation of the Arabidopsis thaliana reference genome.</title>
        <authorList>
            <person name="Cheng C.Y."/>
            <person name="Krishnakumar V."/>
            <person name="Chan A.P."/>
            <person name="Thibaud-Nissen F."/>
            <person name="Schobel S."/>
            <person name="Town C.D."/>
        </authorList>
    </citation>
    <scope>GENOME REANNOTATION</scope>
    <source>
        <strain>cv. Columbia</strain>
    </source>
</reference>
<reference key="3">
    <citation type="journal article" date="2003" name="Science">
        <title>Empirical analysis of transcriptional activity in the Arabidopsis genome.</title>
        <authorList>
            <person name="Yamada K."/>
            <person name="Lim J."/>
            <person name="Dale J.M."/>
            <person name="Chen H."/>
            <person name="Shinn P."/>
            <person name="Palm C.J."/>
            <person name="Southwick A.M."/>
            <person name="Wu H.C."/>
            <person name="Kim C.J."/>
            <person name="Nguyen M."/>
            <person name="Pham P.K."/>
            <person name="Cheuk R.F."/>
            <person name="Karlin-Newmann G."/>
            <person name="Liu S.X."/>
            <person name="Lam B."/>
            <person name="Sakano H."/>
            <person name="Wu T."/>
            <person name="Yu G."/>
            <person name="Miranda M."/>
            <person name="Quach H.L."/>
            <person name="Tripp M."/>
            <person name="Chang C.H."/>
            <person name="Lee J.M."/>
            <person name="Toriumi M.J."/>
            <person name="Chan M.M."/>
            <person name="Tang C.C."/>
            <person name="Onodera C.S."/>
            <person name="Deng J.M."/>
            <person name="Akiyama K."/>
            <person name="Ansari Y."/>
            <person name="Arakawa T."/>
            <person name="Banh J."/>
            <person name="Banno F."/>
            <person name="Bowser L."/>
            <person name="Brooks S.Y."/>
            <person name="Carninci P."/>
            <person name="Chao Q."/>
            <person name="Choy N."/>
            <person name="Enju A."/>
            <person name="Goldsmith A.D."/>
            <person name="Gurjal M."/>
            <person name="Hansen N.F."/>
            <person name="Hayashizaki Y."/>
            <person name="Johnson-Hopson C."/>
            <person name="Hsuan V.W."/>
            <person name="Iida K."/>
            <person name="Karnes M."/>
            <person name="Khan S."/>
            <person name="Koesema E."/>
            <person name="Ishida J."/>
            <person name="Jiang P.X."/>
            <person name="Jones T."/>
            <person name="Kawai J."/>
            <person name="Kamiya A."/>
            <person name="Meyers C."/>
            <person name="Nakajima M."/>
            <person name="Narusaka M."/>
            <person name="Seki M."/>
            <person name="Sakurai T."/>
            <person name="Satou M."/>
            <person name="Tamse R."/>
            <person name="Vaysberg M."/>
            <person name="Wallender E.K."/>
            <person name="Wong C."/>
            <person name="Yamamura Y."/>
            <person name="Yuan S."/>
            <person name="Shinozaki K."/>
            <person name="Davis R.W."/>
            <person name="Theologis A."/>
            <person name="Ecker J.R."/>
        </authorList>
    </citation>
    <scope>NUCLEOTIDE SEQUENCE [LARGE SCALE MRNA]</scope>
    <source>
        <strain>cv. Columbia</strain>
    </source>
</reference>
<reference key="4">
    <citation type="submission" date="2002-03" db="EMBL/GenBank/DDBJ databases">
        <title>Full-length cDNA from Arabidopsis thaliana.</title>
        <authorList>
            <person name="Brover V.V."/>
            <person name="Troukhan M.E."/>
            <person name="Alexandrov N.A."/>
            <person name="Lu Y.-P."/>
            <person name="Flavell R.B."/>
            <person name="Feldmann K.A."/>
        </authorList>
    </citation>
    <scope>NUCLEOTIDE SEQUENCE [LARGE SCALE MRNA]</scope>
</reference>
<reference key="5">
    <citation type="journal article" date="1998" name="Plant Physiol.">
        <title>Superoxide dismutase in Arabidopsis: an eclectic enzyme family with disparate regulation and protein localization.</title>
        <authorList>
            <person name="Kliebenstein D.J."/>
            <person name="Monde R.A."/>
            <person name="Last R.L."/>
        </authorList>
    </citation>
    <scope>NUCLEOTIDE SEQUENCE [MRNA] OF 1-262</scope>
    <scope>GENE FAMILY</scope>
    <source>
        <strain>cv. Columbia</strain>
    </source>
</reference>
<reference key="6">
    <citation type="journal article" date="2008" name="Plant Cell">
        <title>A heterocomplex of iron superoxide dismutases defends chloroplast nucleoids against oxidative stress and is essential for chloroplast development in Arabidopsis.</title>
        <authorList>
            <person name="Myouga F."/>
            <person name="Hosoda C."/>
            <person name="Umezawa T."/>
            <person name="Iizumi H."/>
            <person name="Kuromori T."/>
            <person name="Motohashi R."/>
            <person name="Shono Y."/>
            <person name="Nagata N."/>
            <person name="Ikeuchi M."/>
            <person name="Shinozaki K."/>
        </authorList>
    </citation>
    <scope>FUNCTION</scope>
    <scope>DISRUPTION PHENOTYPE</scope>
    <scope>CATALYTIC ACTIVITY</scope>
    <scope>SUBUNIT</scope>
    <scope>SUBCELLULAR LOCATION</scope>
</reference>
<reference key="7">
    <citation type="journal article" date="2013" name="New Phytol.">
        <title>CHAPERONIN 20 mediates iron superoxide dismutase (FeSOD) activity independent of its co-chaperonin role in Arabidopsis chloroplasts.</title>
        <authorList>
            <person name="Kuo W.Y."/>
            <person name="Huang C.H."/>
            <person name="Liu A.C."/>
            <person name="Cheng C.P."/>
            <person name="Li S.H."/>
            <person name="Chang W.C."/>
            <person name="Weiss C."/>
            <person name="Azem A."/>
            <person name="Jinn T.L."/>
        </authorList>
    </citation>
    <scope>ACTIVITY REGULATION</scope>
    <source>
        <strain>cv. Columbia</strain>
    </source>
</reference>
<reference key="8">
    <citation type="journal article" date="2014" name="Mol. Plant">
        <title>AtECB1/MRL7, a thioredoxin-like fold protein with disulfide reductase activity, regulates chloroplast gene expression and chloroplast biogenesis in Arabidopsis thaliana.</title>
        <authorList>
            <person name="Yua Q.B."/>
            <person name="Ma Q."/>
            <person name="Kong M.M."/>
            <person name="Zhao T.T."/>
            <person name="Zhang X.L."/>
            <person name="Zhou Q."/>
            <person name="Huang C."/>
            <person name="Chong K."/>
            <person name="Yang Z.N."/>
        </authorList>
    </citation>
    <scope>INTERACTION WITH MRL7</scope>
</reference>